<accession>A8YVT1</accession>
<feature type="chain" id="PRO_1000072246" description="Large ribosomal subunit protein bL19">
    <location>
        <begin position="1"/>
        <end position="115"/>
    </location>
</feature>
<dbReference type="EMBL" id="CP000517">
    <property type="protein sequence ID" value="ABX27366.1"/>
    <property type="molecule type" value="Genomic_DNA"/>
</dbReference>
<dbReference type="RefSeq" id="WP_003629071.1">
    <property type="nucleotide sequence ID" value="NC_010080.1"/>
</dbReference>
<dbReference type="SMR" id="A8YVT1"/>
<dbReference type="GeneID" id="93289627"/>
<dbReference type="KEGG" id="lhe:lhv_1368"/>
<dbReference type="eggNOG" id="COG0335">
    <property type="taxonomic scope" value="Bacteria"/>
</dbReference>
<dbReference type="HOGENOM" id="CLU_103507_2_1_9"/>
<dbReference type="Proteomes" id="UP000000790">
    <property type="component" value="Chromosome"/>
</dbReference>
<dbReference type="GO" id="GO:0022625">
    <property type="term" value="C:cytosolic large ribosomal subunit"/>
    <property type="evidence" value="ECO:0007669"/>
    <property type="project" value="TreeGrafter"/>
</dbReference>
<dbReference type="GO" id="GO:0003735">
    <property type="term" value="F:structural constituent of ribosome"/>
    <property type="evidence" value="ECO:0007669"/>
    <property type="project" value="InterPro"/>
</dbReference>
<dbReference type="GO" id="GO:0006412">
    <property type="term" value="P:translation"/>
    <property type="evidence" value="ECO:0007669"/>
    <property type="project" value="UniProtKB-UniRule"/>
</dbReference>
<dbReference type="FunFam" id="2.30.30.790:FF:000001">
    <property type="entry name" value="50S ribosomal protein L19"/>
    <property type="match status" value="1"/>
</dbReference>
<dbReference type="Gene3D" id="2.30.30.790">
    <property type="match status" value="1"/>
</dbReference>
<dbReference type="HAMAP" id="MF_00402">
    <property type="entry name" value="Ribosomal_bL19"/>
    <property type="match status" value="1"/>
</dbReference>
<dbReference type="InterPro" id="IPR001857">
    <property type="entry name" value="Ribosomal_bL19"/>
</dbReference>
<dbReference type="InterPro" id="IPR018257">
    <property type="entry name" value="Ribosomal_bL19_CS"/>
</dbReference>
<dbReference type="InterPro" id="IPR038657">
    <property type="entry name" value="Ribosomal_bL19_sf"/>
</dbReference>
<dbReference type="InterPro" id="IPR008991">
    <property type="entry name" value="Translation_prot_SH3-like_sf"/>
</dbReference>
<dbReference type="NCBIfam" id="TIGR01024">
    <property type="entry name" value="rplS_bact"/>
    <property type="match status" value="1"/>
</dbReference>
<dbReference type="PANTHER" id="PTHR15680:SF9">
    <property type="entry name" value="LARGE RIBOSOMAL SUBUNIT PROTEIN BL19M"/>
    <property type="match status" value="1"/>
</dbReference>
<dbReference type="PANTHER" id="PTHR15680">
    <property type="entry name" value="RIBOSOMAL PROTEIN L19"/>
    <property type="match status" value="1"/>
</dbReference>
<dbReference type="Pfam" id="PF01245">
    <property type="entry name" value="Ribosomal_L19"/>
    <property type="match status" value="1"/>
</dbReference>
<dbReference type="PIRSF" id="PIRSF002191">
    <property type="entry name" value="Ribosomal_L19"/>
    <property type="match status" value="1"/>
</dbReference>
<dbReference type="PRINTS" id="PR00061">
    <property type="entry name" value="RIBOSOMALL19"/>
</dbReference>
<dbReference type="SUPFAM" id="SSF50104">
    <property type="entry name" value="Translation proteins SH3-like domain"/>
    <property type="match status" value="1"/>
</dbReference>
<dbReference type="PROSITE" id="PS01015">
    <property type="entry name" value="RIBOSOMAL_L19"/>
    <property type="match status" value="1"/>
</dbReference>
<name>RL19_LACH4</name>
<comment type="function">
    <text evidence="1">This protein is located at the 30S-50S ribosomal subunit interface and may play a role in the structure and function of the aminoacyl-tRNA binding site.</text>
</comment>
<comment type="similarity">
    <text evidence="1">Belongs to the bacterial ribosomal protein bL19 family.</text>
</comment>
<protein>
    <recommendedName>
        <fullName evidence="1">Large ribosomal subunit protein bL19</fullName>
    </recommendedName>
    <alternativeName>
        <fullName evidence="2">50S ribosomal protein L19</fullName>
    </alternativeName>
</protein>
<organism>
    <name type="scientific">Lactobacillus helveticus (strain DPC 4571)</name>
    <dbReference type="NCBI Taxonomy" id="405566"/>
    <lineage>
        <taxon>Bacteria</taxon>
        <taxon>Bacillati</taxon>
        <taxon>Bacillota</taxon>
        <taxon>Bacilli</taxon>
        <taxon>Lactobacillales</taxon>
        <taxon>Lactobacillaceae</taxon>
        <taxon>Lactobacillus</taxon>
    </lineage>
</organism>
<keyword id="KW-0687">Ribonucleoprotein</keyword>
<keyword id="KW-0689">Ribosomal protein</keyword>
<reference key="1">
    <citation type="journal article" date="2008" name="J. Bacteriol.">
        <title>Genome sequence of Lactobacillus helveticus: an organism distinguished by selective gene loss and IS element expansion.</title>
        <authorList>
            <person name="Callanan M."/>
            <person name="Kaleta P."/>
            <person name="O'Callaghan J."/>
            <person name="O'Sullivan O."/>
            <person name="Jordan K."/>
            <person name="McAuliffe O."/>
            <person name="Sangrador-Vegas A."/>
            <person name="Slattery L."/>
            <person name="Fitzgerald G.F."/>
            <person name="Beresford T."/>
            <person name="Ross R.P."/>
        </authorList>
    </citation>
    <scope>NUCLEOTIDE SEQUENCE [LARGE SCALE GENOMIC DNA]</scope>
    <source>
        <strain>DPC 4571</strain>
    </source>
</reference>
<gene>
    <name evidence="1" type="primary">rplS</name>
    <name type="ordered locus">lhv_1368</name>
</gene>
<evidence type="ECO:0000255" key="1">
    <source>
        <dbReference type="HAMAP-Rule" id="MF_00402"/>
    </source>
</evidence>
<evidence type="ECO:0000305" key="2"/>
<proteinExistence type="inferred from homology"/>
<sequence length="115" mass="13057">MDPLIQELTKEQIRDDIPAFRAGDTVTVHVRVVEGTHERIQLFEGVVIKKKGTGIGATYTVRKIASGVGVERTFPVNDPRVAKVEVKRHGRVRRAKLYYLRERHGKSARIAEARR</sequence>